<name>SYT_SOLM1</name>
<dbReference type="EC" id="6.1.1.3" evidence="1"/>
<dbReference type="EMBL" id="AP010904">
    <property type="protein sequence ID" value="BAH74550.1"/>
    <property type="molecule type" value="Genomic_DNA"/>
</dbReference>
<dbReference type="RefSeq" id="WP_015859780.1">
    <property type="nucleotide sequence ID" value="NC_012796.1"/>
</dbReference>
<dbReference type="SMR" id="C4XL11"/>
<dbReference type="STRING" id="573370.DMR_10590"/>
<dbReference type="KEGG" id="dma:DMR_10590"/>
<dbReference type="eggNOG" id="COG0441">
    <property type="taxonomic scope" value="Bacteria"/>
</dbReference>
<dbReference type="HOGENOM" id="CLU_008554_0_1_7"/>
<dbReference type="OrthoDB" id="9802304at2"/>
<dbReference type="Proteomes" id="UP000009071">
    <property type="component" value="Chromosome"/>
</dbReference>
<dbReference type="GO" id="GO:0005829">
    <property type="term" value="C:cytosol"/>
    <property type="evidence" value="ECO:0007669"/>
    <property type="project" value="TreeGrafter"/>
</dbReference>
<dbReference type="GO" id="GO:0005524">
    <property type="term" value="F:ATP binding"/>
    <property type="evidence" value="ECO:0007669"/>
    <property type="project" value="UniProtKB-UniRule"/>
</dbReference>
<dbReference type="GO" id="GO:0046872">
    <property type="term" value="F:metal ion binding"/>
    <property type="evidence" value="ECO:0007669"/>
    <property type="project" value="UniProtKB-KW"/>
</dbReference>
<dbReference type="GO" id="GO:0004829">
    <property type="term" value="F:threonine-tRNA ligase activity"/>
    <property type="evidence" value="ECO:0007669"/>
    <property type="project" value="UniProtKB-UniRule"/>
</dbReference>
<dbReference type="GO" id="GO:0000049">
    <property type="term" value="F:tRNA binding"/>
    <property type="evidence" value="ECO:0007669"/>
    <property type="project" value="UniProtKB-KW"/>
</dbReference>
<dbReference type="GO" id="GO:0006435">
    <property type="term" value="P:threonyl-tRNA aminoacylation"/>
    <property type="evidence" value="ECO:0007669"/>
    <property type="project" value="UniProtKB-UniRule"/>
</dbReference>
<dbReference type="CDD" id="cd01667">
    <property type="entry name" value="TGS_ThrRS"/>
    <property type="match status" value="1"/>
</dbReference>
<dbReference type="CDD" id="cd00860">
    <property type="entry name" value="ThrRS_anticodon"/>
    <property type="match status" value="1"/>
</dbReference>
<dbReference type="CDD" id="cd00771">
    <property type="entry name" value="ThrRS_core"/>
    <property type="match status" value="1"/>
</dbReference>
<dbReference type="FunFam" id="3.30.54.20:FF:000002">
    <property type="entry name" value="Threonine--tRNA ligase"/>
    <property type="match status" value="1"/>
</dbReference>
<dbReference type="FunFam" id="3.30.930.10:FF:000002">
    <property type="entry name" value="Threonine--tRNA ligase"/>
    <property type="match status" value="1"/>
</dbReference>
<dbReference type="FunFam" id="3.40.50.800:FF:000001">
    <property type="entry name" value="Threonine--tRNA ligase"/>
    <property type="match status" value="1"/>
</dbReference>
<dbReference type="FunFam" id="3.30.980.10:FF:000005">
    <property type="entry name" value="Threonyl-tRNA synthetase, mitochondrial"/>
    <property type="match status" value="1"/>
</dbReference>
<dbReference type="Gene3D" id="3.30.54.20">
    <property type="match status" value="1"/>
</dbReference>
<dbReference type="Gene3D" id="3.40.50.800">
    <property type="entry name" value="Anticodon-binding domain"/>
    <property type="match status" value="1"/>
</dbReference>
<dbReference type="Gene3D" id="3.30.930.10">
    <property type="entry name" value="Bira Bifunctional Protein, Domain 2"/>
    <property type="match status" value="1"/>
</dbReference>
<dbReference type="Gene3D" id="3.30.980.10">
    <property type="entry name" value="Threonyl-trna Synthetase, Chain A, domain 2"/>
    <property type="match status" value="1"/>
</dbReference>
<dbReference type="HAMAP" id="MF_00184">
    <property type="entry name" value="Thr_tRNA_synth"/>
    <property type="match status" value="1"/>
</dbReference>
<dbReference type="InterPro" id="IPR002314">
    <property type="entry name" value="aa-tRNA-synt_IIb"/>
</dbReference>
<dbReference type="InterPro" id="IPR006195">
    <property type="entry name" value="aa-tRNA-synth_II"/>
</dbReference>
<dbReference type="InterPro" id="IPR045864">
    <property type="entry name" value="aa-tRNA-synth_II/BPL/LPL"/>
</dbReference>
<dbReference type="InterPro" id="IPR004154">
    <property type="entry name" value="Anticodon-bd"/>
</dbReference>
<dbReference type="InterPro" id="IPR036621">
    <property type="entry name" value="Anticodon-bd_dom_sf"/>
</dbReference>
<dbReference type="InterPro" id="IPR004095">
    <property type="entry name" value="TGS"/>
</dbReference>
<dbReference type="InterPro" id="IPR002320">
    <property type="entry name" value="Thr-tRNA-ligase_IIa"/>
</dbReference>
<dbReference type="InterPro" id="IPR018163">
    <property type="entry name" value="Thr/Ala-tRNA-synth_IIc_edit"/>
</dbReference>
<dbReference type="InterPro" id="IPR047246">
    <property type="entry name" value="ThrRS_anticodon"/>
</dbReference>
<dbReference type="InterPro" id="IPR033728">
    <property type="entry name" value="ThrRS_core"/>
</dbReference>
<dbReference type="InterPro" id="IPR012947">
    <property type="entry name" value="tRNA_SAD"/>
</dbReference>
<dbReference type="NCBIfam" id="TIGR00418">
    <property type="entry name" value="thrS"/>
    <property type="match status" value="1"/>
</dbReference>
<dbReference type="PANTHER" id="PTHR11451:SF44">
    <property type="entry name" value="THREONINE--TRNA LIGASE, CHLOROPLASTIC_MITOCHONDRIAL 2"/>
    <property type="match status" value="1"/>
</dbReference>
<dbReference type="PANTHER" id="PTHR11451">
    <property type="entry name" value="THREONINE-TRNA LIGASE"/>
    <property type="match status" value="1"/>
</dbReference>
<dbReference type="Pfam" id="PF03129">
    <property type="entry name" value="HGTP_anticodon"/>
    <property type="match status" value="1"/>
</dbReference>
<dbReference type="Pfam" id="PF00587">
    <property type="entry name" value="tRNA-synt_2b"/>
    <property type="match status" value="1"/>
</dbReference>
<dbReference type="Pfam" id="PF07973">
    <property type="entry name" value="tRNA_SAD"/>
    <property type="match status" value="1"/>
</dbReference>
<dbReference type="PRINTS" id="PR01047">
    <property type="entry name" value="TRNASYNTHTHR"/>
</dbReference>
<dbReference type="SMART" id="SM00863">
    <property type="entry name" value="tRNA_SAD"/>
    <property type="match status" value="1"/>
</dbReference>
<dbReference type="SUPFAM" id="SSF52954">
    <property type="entry name" value="Class II aaRS ABD-related"/>
    <property type="match status" value="1"/>
</dbReference>
<dbReference type="SUPFAM" id="SSF55681">
    <property type="entry name" value="Class II aaRS and biotin synthetases"/>
    <property type="match status" value="1"/>
</dbReference>
<dbReference type="SUPFAM" id="SSF55186">
    <property type="entry name" value="ThrRS/AlaRS common domain"/>
    <property type="match status" value="1"/>
</dbReference>
<dbReference type="PROSITE" id="PS50862">
    <property type="entry name" value="AA_TRNA_LIGASE_II"/>
    <property type="match status" value="1"/>
</dbReference>
<dbReference type="PROSITE" id="PS51880">
    <property type="entry name" value="TGS"/>
    <property type="match status" value="1"/>
</dbReference>
<feature type="chain" id="PRO_1000203902" description="Threonine--tRNA ligase">
    <location>
        <begin position="1"/>
        <end position="647"/>
    </location>
</feature>
<feature type="domain" description="TGS" evidence="2">
    <location>
        <begin position="1"/>
        <end position="60"/>
    </location>
</feature>
<feature type="region of interest" description="Catalytic" evidence="1">
    <location>
        <begin position="242"/>
        <end position="533"/>
    </location>
</feature>
<feature type="binding site" evidence="1">
    <location>
        <position position="334"/>
    </location>
    <ligand>
        <name>Zn(2+)</name>
        <dbReference type="ChEBI" id="CHEBI:29105"/>
    </ligand>
</feature>
<feature type="binding site" evidence="1">
    <location>
        <position position="385"/>
    </location>
    <ligand>
        <name>Zn(2+)</name>
        <dbReference type="ChEBI" id="CHEBI:29105"/>
    </ligand>
</feature>
<feature type="binding site" evidence="1">
    <location>
        <position position="510"/>
    </location>
    <ligand>
        <name>Zn(2+)</name>
        <dbReference type="ChEBI" id="CHEBI:29105"/>
    </ligand>
</feature>
<evidence type="ECO:0000255" key="1">
    <source>
        <dbReference type="HAMAP-Rule" id="MF_00184"/>
    </source>
</evidence>
<evidence type="ECO:0000255" key="2">
    <source>
        <dbReference type="PROSITE-ProRule" id="PRU01228"/>
    </source>
</evidence>
<protein>
    <recommendedName>
        <fullName evidence="1">Threonine--tRNA ligase</fullName>
        <ecNumber evidence="1">6.1.1.3</ecNumber>
    </recommendedName>
    <alternativeName>
        <fullName evidence="1">Threonyl-tRNA synthetase</fullName>
        <shortName evidence="1">ThrRS</shortName>
    </alternativeName>
</protein>
<proteinExistence type="inferred from homology"/>
<sequence length="647" mass="73047">MQVTIEDQSLEAAAGEACGQVLSRAVSGKRLKNAVACLVDGQPRDLAFPLPEDAHELALVAADSPMGLSIIRHSAAHIMAEAVKTLFPSVQVTIGPAIENGFYYDFAYERPFTPDDLEAIEAEMQKSIAANQPFSCTYVPKADAKALFAAQGESYKLEIMDENIVGDTVSLYRHGTFTDLCRGPHVPTTGLVRAVKLLSVAGAYWRGDEKRPMLQRIYGTAFASAADLKTYLHHIEEAKKRDHRKLGAQLDLFSFSEEVGAGMCIWHPKGELIRTIIEDFERREHLRRGYDLVRGPLILRRELWERSGHYDNYRENMYFTEIDEQSYGIKPMNCLSHMLIYKSRVRSYRDLPQRYFELGVVHRHEKSGVLHGLLRVRQFTQDDAHILCRPDQLQEEITGVVRFVQDVVGLFGFDFEAELSTRPEKSIGSDEDWDRATKALVDAMESIGLPYEVNEGDGAFYGPKIDIKLKDALDRRWQCATIQCDFTLPERFDLVYTDADGERKRPVMLHRVILGAVERFLGVLIEHTAGALPTWLSPVQARILIVTDAQKEFAEQALARLKEAGIRVELDDRNEKLGFKVREAQVEKIPYMLVAGDKEKELGGLNVRLRSGENLGVKTLDEVALMITADCQEPFKRGGMRYNFCSQ</sequence>
<accession>C4XL11</accession>
<organism>
    <name type="scientific">Solidesulfovibrio magneticus (strain ATCC 700980 / DSM 13731 / RS-1)</name>
    <name type="common">Desulfovibrio magneticus</name>
    <dbReference type="NCBI Taxonomy" id="573370"/>
    <lineage>
        <taxon>Bacteria</taxon>
        <taxon>Pseudomonadati</taxon>
        <taxon>Thermodesulfobacteriota</taxon>
        <taxon>Desulfovibrionia</taxon>
        <taxon>Desulfovibrionales</taxon>
        <taxon>Desulfovibrionaceae</taxon>
        <taxon>Solidesulfovibrio</taxon>
    </lineage>
</organism>
<reference key="1">
    <citation type="journal article" date="2009" name="Genome Res.">
        <title>Whole genome sequence of Desulfovibrio magneticus strain RS-1 revealed common gene clusters in magnetotactic bacteria.</title>
        <authorList>
            <person name="Nakazawa H."/>
            <person name="Arakaki A."/>
            <person name="Narita-Yamada S."/>
            <person name="Yashiro I."/>
            <person name="Jinno K."/>
            <person name="Aoki N."/>
            <person name="Tsuruyama A."/>
            <person name="Okamura Y."/>
            <person name="Tanikawa S."/>
            <person name="Fujita N."/>
            <person name="Takeyama H."/>
            <person name="Matsunaga T."/>
        </authorList>
    </citation>
    <scope>NUCLEOTIDE SEQUENCE [LARGE SCALE GENOMIC DNA]</scope>
    <source>
        <strain>ATCC 700980 / DSM 13731 / RS-1</strain>
    </source>
</reference>
<gene>
    <name evidence="1" type="primary">thrS</name>
    <name type="ordered locus">DMR_10590</name>
</gene>
<keyword id="KW-0030">Aminoacyl-tRNA synthetase</keyword>
<keyword id="KW-0067">ATP-binding</keyword>
<keyword id="KW-0963">Cytoplasm</keyword>
<keyword id="KW-0436">Ligase</keyword>
<keyword id="KW-0479">Metal-binding</keyword>
<keyword id="KW-0547">Nucleotide-binding</keyword>
<keyword id="KW-0648">Protein biosynthesis</keyword>
<keyword id="KW-0694">RNA-binding</keyword>
<keyword id="KW-0820">tRNA-binding</keyword>
<keyword id="KW-0862">Zinc</keyword>
<comment type="function">
    <text evidence="1">Catalyzes the attachment of threonine to tRNA(Thr) in a two-step reaction: L-threonine is first activated by ATP to form Thr-AMP and then transferred to the acceptor end of tRNA(Thr). Also edits incorrectly charged L-seryl-tRNA(Thr).</text>
</comment>
<comment type="catalytic activity">
    <reaction evidence="1">
        <text>tRNA(Thr) + L-threonine + ATP = L-threonyl-tRNA(Thr) + AMP + diphosphate + H(+)</text>
        <dbReference type="Rhea" id="RHEA:24624"/>
        <dbReference type="Rhea" id="RHEA-COMP:9670"/>
        <dbReference type="Rhea" id="RHEA-COMP:9704"/>
        <dbReference type="ChEBI" id="CHEBI:15378"/>
        <dbReference type="ChEBI" id="CHEBI:30616"/>
        <dbReference type="ChEBI" id="CHEBI:33019"/>
        <dbReference type="ChEBI" id="CHEBI:57926"/>
        <dbReference type="ChEBI" id="CHEBI:78442"/>
        <dbReference type="ChEBI" id="CHEBI:78534"/>
        <dbReference type="ChEBI" id="CHEBI:456215"/>
        <dbReference type="EC" id="6.1.1.3"/>
    </reaction>
</comment>
<comment type="cofactor">
    <cofactor evidence="1">
        <name>Zn(2+)</name>
        <dbReference type="ChEBI" id="CHEBI:29105"/>
    </cofactor>
    <text evidence="1">Binds 1 zinc ion per subunit.</text>
</comment>
<comment type="subunit">
    <text evidence="1">Homodimer.</text>
</comment>
<comment type="subcellular location">
    <subcellularLocation>
        <location evidence="1">Cytoplasm</location>
    </subcellularLocation>
</comment>
<comment type="similarity">
    <text evidence="1">Belongs to the class-II aminoacyl-tRNA synthetase family.</text>
</comment>